<reference key="1">
    <citation type="journal article" date="2008" name="PLoS Genet.">
        <title>Genomic islands in the pathogenic filamentous fungus Aspergillus fumigatus.</title>
        <authorList>
            <person name="Fedorova N.D."/>
            <person name="Khaldi N."/>
            <person name="Joardar V.S."/>
            <person name="Maiti R."/>
            <person name="Amedeo P."/>
            <person name="Anderson M.J."/>
            <person name="Crabtree J."/>
            <person name="Silva J.C."/>
            <person name="Badger J.H."/>
            <person name="Albarraq A."/>
            <person name="Angiuoli S."/>
            <person name="Bussey H."/>
            <person name="Bowyer P."/>
            <person name="Cotty P.J."/>
            <person name="Dyer P.S."/>
            <person name="Egan A."/>
            <person name="Galens K."/>
            <person name="Fraser-Liggett C.M."/>
            <person name="Haas B.J."/>
            <person name="Inman J.M."/>
            <person name="Kent R."/>
            <person name="Lemieux S."/>
            <person name="Malavazi I."/>
            <person name="Orvis J."/>
            <person name="Roemer T."/>
            <person name="Ronning C.M."/>
            <person name="Sundaram J.P."/>
            <person name="Sutton G."/>
            <person name="Turner G."/>
            <person name="Venter J.C."/>
            <person name="White O.R."/>
            <person name="Whitty B.R."/>
            <person name="Youngman P."/>
            <person name="Wolfe K.H."/>
            <person name="Goldman G.H."/>
            <person name="Wortman J.R."/>
            <person name="Jiang B."/>
            <person name="Denning D.W."/>
            <person name="Nierman W.C."/>
        </authorList>
    </citation>
    <scope>NUCLEOTIDE SEQUENCE [LARGE SCALE GENOMIC DNA]</scope>
    <source>
        <strain>CBS 144.89 / FGSC A1163 / CEA10</strain>
    </source>
</reference>
<comment type="function">
    <text evidence="1">Involved in cell fusion during mating by stabilizing the plasma membrane fusion event.</text>
</comment>
<comment type="subcellular location">
    <subcellularLocation>
        <location evidence="1">Cell membrane</location>
        <topology evidence="1">Multi-pass membrane protein</topology>
    </subcellularLocation>
</comment>
<comment type="similarity">
    <text evidence="3">Belongs to the PRM1 family.</text>
</comment>
<name>PRM1_ASPFC</name>
<gene>
    <name type="primary">prm1</name>
    <name type="ORF">AFUB_068240</name>
</gene>
<dbReference type="EMBL" id="DS499598">
    <property type="protein sequence ID" value="EDP50487.1"/>
    <property type="molecule type" value="Genomic_DNA"/>
</dbReference>
<dbReference type="GlyCosmos" id="B0Y6V2">
    <property type="glycosylation" value="11 sites, No reported glycans"/>
</dbReference>
<dbReference type="EnsemblFungi" id="EDP50487">
    <property type="protein sequence ID" value="EDP50487"/>
    <property type="gene ID" value="AFUB_068240"/>
</dbReference>
<dbReference type="VEuPathDB" id="FungiDB:AFUB_068240"/>
<dbReference type="HOGENOM" id="CLU_010191_1_0_1"/>
<dbReference type="OrthoDB" id="74071at5052"/>
<dbReference type="PhylomeDB" id="B0Y6V2"/>
<dbReference type="Proteomes" id="UP000001699">
    <property type="component" value="Unassembled WGS sequence"/>
</dbReference>
<dbReference type="GO" id="GO:0043332">
    <property type="term" value="C:mating projection tip"/>
    <property type="evidence" value="ECO:0007669"/>
    <property type="project" value="InterPro"/>
</dbReference>
<dbReference type="GO" id="GO:0005886">
    <property type="term" value="C:plasma membrane"/>
    <property type="evidence" value="ECO:0007669"/>
    <property type="project" value="UniProtKB-SubCell"/>
</dbReference>
<dbReference type="GO" id="GO:0032220">
    <property type="term" value="P:plasma membrane fusion involved in cytogamy"/>
    <property type="evidence" value="ECO:0007669"/>
    <property type="project" value="TreeGrafter"/>
</dbReference>
<dbReference type="InterPro" id="IPR026777">
    <property type="entry name" value="PRM1"/>
</dbReference>
<dbReference type="PANTHER" id="PTHR31030">
    <property type="entry name" value="PLASMA MEMBRANE FUSION PROTEIN PRM1"/>
    <property type="match status" value="1"/>
</dbReference>
<dbReference type="PANTHER" id="PTHR31030:SF1">
    <property type="entry name" value="PLASMA MEMBRANE FUSION PROTEIN PRM1"/>
    <property type="match status" value="1"/>
</dbReference>
<accession>B0Y6V2</accession>
<keyword id="KW-1003">Cell membrane</keyword>
<keyword id="KW-0184">Conjugation</keyword>
<keyword id="KW-0325">Glycoprotein</keyword>
<keyword id="KW-0472">Membrane</keyword>
<keyword id="KW-0812">Transmembrane</keyword>
<keyword id="KW-1133">Transmembrane helix</keyword>
<proteinExistence type="inferred from homology"/>
<protein>
    <recommendedName>
        <fullName>Plasma membrane fusion protein prm1</fullName>
    </recommendedName>
</protein>
<sequence length="740" mass="80104">MLFSRSGRSIFPLLPPYAAHAPNPNQGHIIALPPDGLTPYLGLRARLSQVWINRWTILLLLVLVRVLLAASGLQADMSTAKREALSACTSVESMGSSMASMPHYLSQGVNELTATGVEKAVSGLKSMLMLTITGVEELVLFIIKVLYQTYLCLFTLAVRGSVHVAVGVIKEAADFLNSTVKEVGDDIGKAVSTFESAFNKFLDGVNTVASAFGASVPTLDLNSSISTLENLQLPSSIDQGLDKLNSSLPTFDEVNNFTQTVLRTPFEEVKKLVNESLGTYTFDRSLLPVPAKEQLTFCEGSNGIDSFFDSVTDLVMKARKIFIAILIVAATLACVPMAWQEIRRWRSMKERSQLVRKEAHDPMDVVYIVSRPYTAAAGIKAASRFSNSRRQILVRWAIAYATTPAALFVLCLGVAGLLSCLCQYLLLQAVEKTVPELSTQVGAFADKVVDSLQNASAEWANDANGVIGHMSQDLNENVFGWVNTSTTALNDTLNTFVDKTTGVLNDTFGGTLLYEPLMDVFGCLIGLKVQGIQKGLTWVHDHAHIDFPLLPNDTFSRGAAASISSNSSNPSDSFLADAGDQTSNKITEVVIRVVNKVEDGIRTETIISGVIILIWVFIALIGIVRALTLFWVRDRNRGEGGGARVNHHLSDAGGFIDVPLMAVSNTNTDARSMPPPAPAPRYEASTSTVVASRAVPVSSTHHEDEKLGFAGERQYGSALKVDGAADLRGSSYVEYDMEKR</sequence>
<evidence type="ECO:0000250" key="1"/>
<evidence type="ECO:0000255" key="2"/>
<evidence type="ECO:0000305" key="3"/>
<feature type="chain" id="PRO_0000337268" description="Plasma membrane fusion protein prm1">
    <location>
        <begin position="1"/>
        <end position="740"/>
    </location>
</feature>
<feature type="topological domain" description="Extracellular" evidence="1">
    <location>
        <begin position="1"/>
        <end position="54"/>
    </location>
</feature>
<feature type="transmembrane region" description="Helical" evidence="2">
    <location>
        <begin position="55"/>
        <end position="75"/>
    </location>
</feature>
<feature type="topological domain" description="Cytoplasmic" evidence="1">
    <location>
        <begin position="76"/>
        <end position="137"/>
    </location>
</feature>
<feature type="transmembrane region" description="Helical" evidence="2">
    <location>
        <begin position="138"/>
        <end position="158"/>
    </location>
</feature>
<feature type="topological domain" description="Extracellular" evidence="1">
    <location>
        <begin position="159"/>
        <end position="320"/>
    </location>
</feature>
<feature type="transmembrane region" description="Helical" evidence="2">
    <location>
        <begin position="321"/>
        <end position="341"/>
    </location>
</feature>
<feature type="topological domain" description="Cytoplasmic" evidence="1">
    <location>
        <begin position="342"/>
        <end position="397"/>
    </location>
</feature>
<feature type="transmembrane region" description="Helical" evidence="2">
    <location>
        <begin position="398"/>
        <end position="418"/>
    </location>
</feature>
<feature type="topological domain" description="Extracellular" evidence="1">
    <location>
        <begin position="419"/>
        <end position="603"/>
    </location>
</feature>
<feature type="transmembrane region" description="Helical" evidence="2">
    <location>
        <begin position="604"/>
        <end position="624"/>
    </location>
</feature>
<feature type="topological domain" description="Cytoplasmic" evidence="1">
    <location>
        <begin position="625"/>
        <end position="740"/>
    </location>
</feature>
<feature type="glycosylation site" description="N-linked (GlcNAc...) asparagine" evidence="2">
    <location>
        <position position="177"/>
    </location>
</feature>
<feature type="glycosylation site" description="N-linked (GlcNAc...) asparagine" evidence="2">
    <location>
        <position position="222"/>
    </location>
</feature>
<feature type="glycosylation site" description="N-linked (GlcNAc...) asparagine" evidence="2">
    <location>
        <position position="245"/>
    </location>
</feature>
<feature type="glycosylation site" description="N-linked (GlcNAc...) asparagine" evidence="2">
    <location>
        <position position="256"/>
    </location>
</feature>
<feature type="glycosylation site" description="N-linked (GlcNAc...) asparagine" evidence="2">
    <location>
        <position position="274"/>
    </location>
</feature>
<feature type="glycosylation site" description="N-linked (GlcNAc...) asparagine" evidence="2">
    <location>
        <position position="454"/>
    </location>
</feature>
<feature type="glycosylation site" description="N-linked (GlcNAc...) asparagine" evidence="2">
    <location>
        <position position="483"/>
    </location>
</feature>
<feature type="glycosylation site" description="N-linked (GlcNAc...) asparagine" evidence="2">
    <location>
        <position position="490"/>
    </location>
</feature>
<feature type="glycosylation site" description="N-linked (GlcNAc...) asparagine" evidence="2">
    <location>
        <position position="505"/>
    </location>
</feature>
<feature type="glycosylation site" description="N-linked (GlcNAc...) asparagine" evidence="2">
    <location>
        <position position="552"/>
    </location>
</feature>
<feature type="glycosylation site" description="N-linked (GlcNAc...) asparagine" evidence="2">
    <location>
        <position position="566"/>
    </location>
</feature>
<organism>
    <name type="scientific">Aspergillus fumigatus (strain CBS 144.89 / FGSC A1163 / CEA10)</name>
    <name type="common">Neosartorya fumigata</name>
    <dbReference type="NCBI Taxonomy" id="451804"/>
    <lineage>
        <taxon>Eukaryota</taxon>
        <taxon>Fungi</taxon>
        <taxon>Dikarya</taxon>
        <taxon>Ascomycota</taxon>
        <taxon>Pezizomycotina</taxon>
        <taxon>Eurotiomycetes</taxon>
        <taxon>Eurotiomycetidae</taxon>
        <taxon>Eurotiales</taxon>
        <taxon>Aspergillaceae</taxon>
        <taxon>Aspergillus</taxon>
        <taxon>Aspergillus subgen. Fumigati</taxon>
    </lineage>
</organism>